<protein>
    <recommendedName>
        <fullName>Putative type II secretion system protein L</fullName>
        <shortName>T2SS protein L</shortName>
    </recommendedName>
    <alternativeName>
        <fullName>Putative general secretion pathway protein L</fullName>
    </alternativeName>
</protein>
<accession>P45763</accession>
<accession>Q2M6Z8</accession>
<organism>
    <name type="scientific">Escherichia coli (strain K12)</name>
    <dbReference type="NCBI Taxonomy" id="83333"/>
    <lineage>
        <taxon>Bacteria</taxon>
        <taxon>Pseudomonadati</taxon>
        <taxon>Pseudomonadota</taxon>
        <taxon>Gammaproteobacteria</taxon>
        <taxon>Enterobacterales</taxon>
        <taxon>Enterobacteriaceae</taxon>
        <taxon>Escherichia</taxon>
    </lineage>
</organism>
<feature type="chain" id="PRO_0000207314" description="Putative type II secretion system protein L">
    <location>
        <begin position="1"/>
        <end position="387"/>
    </location>
</feature>
<feature type="topological domain" description="Cytoplasmic" evidence="1">
    <location>
        <begin position="1"/>
        <end position="241"/>
    </location>
</feature>
<feature type="transmembrane region" description="Helical" evidence="3">
    <location>
        <begin position="242"/>
        <end position="260"/>
    </location>
</feature>
<feature type="topological domain" description="Periplasmic" evidence="1">
    <location>
        <begin position="261"/>
        <end position="387"/>
    </location>
</feature>
<proteinExistence type="evidence at transcript level"/>
<comment type="function">
    <text evidence="1">Inner membrane component of the type II secretion system required for the energy-dependent secretion of extracellular factors such as proteases and toxins from the periplasm. Plays a role in the complex assembly and recruits GspM resulting in a stable complex in the inner membrane. Provides thus a link between the energy-providing GspE protein in the cytoplasm and the rest of the T2SS machinery.</text>
</comment>
<comment type="subunit">
    <text evidence="1 2">Type II secretion system is composed of four main components: the outer membrane complex, the inner membrane complex, the cytoplasmic secretion ATPase and the periplasm-spanning pseudopilus (By similarity). Forms homodimers. Interacts with GspM. Interacts with GspE and GspF (By similarity).</text>
</comment>
<comment type="subcellular location">
    <subcellularLocation>
        <location evidence="1">Cell inner membrane</location>
        <topology evidence="1">Single-pass membrane protein</topology>
    </subcellularLocation>
</comment>
<comment type="induction">
    <text evidence="4">Silenced by the DNA-binding protein H-NS under standard growth conditions.</text>
</comment>
<comment type="miscellaneous">
    <text>Part of a cryptic operon that encodes proteins involved in type II secretion machinery in other organisms, but is not expressed in strain K12.</text>
</comment>
<comment type="similarity">
    <text evidence="5">Belongs to the GSP L family.</text>
</comment>
<comment type="sequence caution" evidence="5">
    <conflict type="erroneous initiation">
        <sequence resource="EMBL-CDS" id="AAA58130"/>
    </conflict>
    <text>Extended N-terminus.</text>
</comment>
<name>GSPL_ECOLI</name>
<sequence length="387" mass="44540">MPESLMVIRSSSTLRKHWEWMTFSADSVSSVHTLTDDLPLESLADQPGAGNVHLLIPPEGLLYRSLTLPNAKYKLTAQTLQWLAEETLPDNTQDWHWTVVDKQNESVEVIGIQSEKLSRYLERLHTAGLNVTRVLPDGCYLPWEVDSWTLVNQQTSWLIRSAAHAFNELDEHWLQHLAAQFPPENMLCYGVVPHGVAAANPLIQHPEIPSLSLYSADIAFQRYDMLHGIFRKQKTVSKSGKWLARLAVSCLVLAILSFVGSRSIALWHTLKIEDQLQQQQQETWQRYFPQIKRTHNFRFYFKQQLAQQYPEAVPLLYHLQTLLLEHPELQLMEANYSQKQKSLTLKMSAKSEANIDRFCELTQSWLPMEKTEKDPVSGVWTVRNSGK</sequence>
<keyword id="KW-0997">Cell inner membrane</keyword>
<keyword id="KW-1003">Cell membrane</keyword>
<keyword id="KW-0472">Membrane</keyword>
<keyword id="KW-0653">Protein transport</keyword>
<keyword id="KW-1185">Reference proteome</keyword>
<keyword id="KW-0812">Transmembrane</keyword>
<keyword id="KW-1133">Transmembrane helix</keyword>
<keyword id="KW-0813">Transport</keyword>
<gene>
    <name type="primary">gspL</name>
    <name type="synonym">yheK</name>
    <name type="ordered locus">b3333</name>
    <name type="ordered locus">JW5705</name>
</gene>
<dbReference type="EMBL" id="U18997">
    <property type="protein sequence ID" value="AAA58130.1"/>
    <property type="status" value="ALT_INIT"/>
    <property type="molecule type" value="Genomic_DNA"/>
</dbReference>
<dbReference type="EMBL" id="U00096">
    <property type="protein sequence ID" value="AAC76358.2"/>
    <property type="molecule type" value="Genomic_DNA"/>
</dbReference>
<dbReference type="EMBL" id="AP009048">
    <property type="protein sequence ID" value="BAE77958.1"/>
    <property type="molecule type" value="Genomic_DNA"/>
</dbReference>
<dbReference type="PIR" id="H65126">
    <property type="entry name" value="H65126"/>
</dbReference>
<dbReference type="RefSeq" id="NP_417792.2">
    <property type="nucleotide sequence ID" value="NC_000913.3"/>
</dbReference>
<dbReference type="RefSeq" id="WP_001115238.1">
    <property type="nucleotide sequence ID" value="NZ_SSZK01000040.1"/>
</dbReference>
<dbReference type="SMR" id="P45763"/>
<dbReference type="BioGRID" id="4263437">
    <property type="interactions" value="79"/>
</dbReference>
<dbReference type="FunCoup" id="P45763">
    <property type="interactions" value="238"/>
</dbReference>
<dbReference type="STRING" id="511145.b3333"/>
<dbReference type="PaxDb" id="511145-b3333"/>
<dbReference type="EnsemblBacteria" id="AAC76358">
    <property type="protein sequence ID" value="AAC76358"/>
    <property type="gene ID" value="b3333"/>
</dbReference>
<dbReference type="GeneID" id="947842"/>
<dbReference type="KEGG" id="ecj:JW5705"/>
<dbReference type="KEGG" id="eco:b3333"/>
<dbReference type="KEGG" id="ecoc:C3026_18105"/>
<dbReference type="PATRIC" id="fig|1411691.4.peg.3398"/>
<dbReference type="EchoBASE" id="EB2732"/>
<dbReference type="eggNOG" id="COG3297">
    <property type="taxonomic scope" value="Bacteria"/>
</dbReference>
<dbReference type="HOGENOM" id="CLU_061518_0_0_6"/>
<dbReference type="InParanoid" id="P45763"/>
<dbReference type="OMA" id="HFAILHQ"/>
<dbReference type="OrthoDB" id="7011844at2"/>
<dbReference type="BioCyc" id="EcoCyc:G7711-MONOMER"/>
<dbReference type="BioCyc" id="MetaCyc:G7711-MONOMER"/>
<dbReference type="PRO" id="PR:P45763"/>
<dbReference type="Proteomes" id="UP000000625">
    <property type="component" value="Chromosome"/>
</dbReference>
<dbReference type="GO" id="GO:0009276">
    <property type="term" value="C:Gram-negative-bacterium-type cell wall"/>
    <property type="evidence" value="ECO:0007669"/>
    <property type="project" value="InterPro"/>
</dbReference>
<dbReference type="GO" id="GO:0005886">
    <property type="term" value="C:plasma membrane"/>
    <property type="evidence" value="ECO:0000314"/>
    <property type="project" value="EcoCyc"/>
</dbReference>
<dbReference type="GO" id="GO:0015627">
    <property type="term" value="C:type II protein secretion system complex"/>
    <property type="evidence" value="ECO:0007669"/>
    <property type="project" value="InterPro"/>
</dbReference>
<dbReference type="GO" id="GO:0015628">
    <property type="term" value="P:protein secretion by the type II secretion system"/>
    <property type="evidence" value="ECO:0007669"/>
    <property type="project" value="InterPro"/>
</dbReference>
<dbReference type="CDD" id="cd24017">
    <property type="entry name" value="ASKHA_T2SSL_N"/>
    <property type="match status" value="1"/>
</dbReference>
<dbReference type="Gene3D" id="3.30.420.370">
    <property type="match status" value="1"/>
</dbReference>
<dbReference type="Gene3D" id="3.30.420.380">
    <property type="match status" value="1"/>
</dbReference>
<dbReference type="InterPro" id="IPR043129">
    <property type="entry name" value="ATPase_NBD"/>
</dbReference>
<dbReference type="InterPro" id="IPR024230">
    <property type="entry name" value="GspL_cyto_dom"/>
</dbReference>
<dbReference type="InterPro" id="IPR025691">
    <property type="entry name" value="GspL_pp_dom"/>
</dbReference>
<dbReference type="InterPro" id="IPR007812">
    <property type="entry name" value="T2SS_protein-GspL"/>
</dbReference>
<dbReference type="NCBIfam" id="TIGR01709">
    <property type="entry name" value="typeII_sec_gspL"/>
    <property type="match status" value="1"/>
</dbReference>
<dbReference type="Pfam" id="PF12693">
    <property type="entry name" value="GspL_C"/>
    <property type="match status" value="1"/>
</dbReference>
<dbReference type="Pfam" id="PF05134">
    <property type="entry name" value="T2SSL"/>
    <property type="match status" value="1"/>
</dbReference>
<dbReference type="PIRSF" id="PIRSF015761">
    <property type="entry name" value="Protein_L"/>
    <property type="match status" value="1"/>
</dbReference>
<dbReference type="SUPFAM" id="SSF53067">
    <property type="entry name" value="Actin-like ATPase domain"/>
    <property type="match status" value="1"/>
</dbReference>
<evidence type="ECO:0000250" key="1">
    <source>
        <dbReference type="UniProtKB" id="P25060"/>
    </source>
</evidence>
<evidence type="ECO:0000250" key="2">
    <source>
        <dbReference type="UniProtKB" id="Q00514"/>
    </source>
</evidence>
<evidence type="ECO:0000255" key="3"/>
<evidence type="ECO:0000269" key="4">
    <source>
    </source>
</evidence>
<evidence type="ECO:0000305" key="5"/>
<reference key="1">
    <citation type="journal article" date="1997" name="Science">
        <title>The complete genome sequence of Escherichia coli K-12.</title>
        <authorList>
            <person name="Blattner F.R."/>
            <person name="Plunkett G. III"/>
            <person name="Bloch C.A."/>
            <person name="Perna N.T."/>
            <person name="Burland V."/>
            <person name="Riley M."/>
            <person name="Collado-Vides J."/>
            <person name="Glasner J.D."/>
            <person name="Rode C.K."/>
            <person name="Mayhew G.F."/>
            <person name="Gregor J."/>
            <person name="Davis N.W."/>
            <person name="Kirkpatrick H.A."/>
            <person name="Goeden M.A."/>
            <person name="Rose D.J."/>
            <person name="Mau B."/>
            <person name="Shao Y."/>
        </authorList>
    </citation>
    <scope>NUCLEOTIDE SEQUENCE [LARGE SCALE GENOMIC DNA]</scope>
    <source>
        <strain>K12 / MG1655 / ATCC 47076</strain>
    </source>
</reference>
<reference key="2">
    <citation type="journal article" date="2006" name="Mol. Syst. Biol.">
        <title>Highly accurate genome sequences of Escherichia coli K-12 strains MG1655 and W3110.</title>
        <authorList>
            <person name="Hayashi K."/>
            <person name="Morooka N."/>
            <person name="Yamamoto Y."/>
            <person name="Fujita K."/>
            <person name="Isono K."/>
            <person name="Choi S."/>
            <person name="Ohtsubo E."/>
            <person name="Baba T."/>
            <person name="Wanner B.L."/>
            <person name="Mori H."/>
            <person name="Horiuchi T."/>
        </authorList>
    </citation>
    <scope>NUCLEOTIDE SEQUENCE [LARGE SCALE GENOMIC DNA]</scope>
    <source>
        <strain>K12 / W3110 / ATCC 27325 / DSM 5911</strain>
    </source>
</reference>
<reference key="3">
    <citation type="journal article" date="1996" name="J. Bacteriol.">
        <title>The cryptic general secretory pathway (gsp) operon of Escherichia coli K-12 encodes functional proteins.</title>
        <authorList>
            <person name="Francetic O."/>
            <person name="Pugsley A.P."/>
        </authorList>
    </citation>
    <scope>LACK OF EXPRESSION</scope>
    <source>
        <strain>K12 / MC4100 / ATCC 35695 / DSM 6574</strain>
    </source>
</reference>
<reference key="4">
    <citation type="journal article" date="2000" name="EMBO J.">
        <title>Expression of the endogenous type II secretion pathway in Escherichia coli leads to chitinase secretion.</title>
        <authorList>
            <person name="Francetic O."/>
            <person name="Belin D."/>
            <person name="Badaut C."/>
            <person name="Pugsley A.P."/>
        </authorList>
    </citation>
    <scope>LACK OF EXPRESSION</scope>
    <scope>TRANSCRIPTIONAL REGULATION</scope>
    <source>
        <strain>K12 / MC4100 / ATCC 35695 / DSM 6574</strain>
    </source>
</reference>